<name>PURA_WOLTR</name>
<gene>
    <name evidence="1" type="primary">purA</name>
    <name type="ordered locus">Wbm0273</name>
</gene>
<accession>Q5GT12</accession>
<feature type="chain" id="PRO_0000224334" description="Adenylosuccinate synthetase">
    <location>
        <begin position="1"/>
        <end position="435"/>
    </location>
</feature>
<feature type="active site" description="Proton acceptor" evidence="1">
    <location>
        <position position="13"/>
    </location>
</feature>
<feature type="active site" description="Proton donor" evidence="1">
    <location>
        <position position="41"/>
    </location>
</feature>
<feature type="binding site" evidence="1">
    <location>
        <begin position="12"/>
        <end position="18"/>
    </location>
    <ligand>
        <name>GTP</name>
        <dbReference type="ChEBI" id="CHEBI:37565"/>
    </ligand>
</feature>
<feature type="binding site" description="in other chain" evidence="1">
    <location>
        <begin position="13"/>
        <end position="16"/>
    </location>
    <ligand>
        <name>IMP</name>
        <dbReference type="ChEBI" id="CHEBI:58053"/>
        <note>ligand shared between dimeric partners</note>
    </ligand>
</feature>
<feature type="binding site" evidence="1">
    <location>
        <position position="13"/>
    </location>
    <ligand>
        <name>Mg(2+)</name>
        <dbReference type="ChEBI" id="CHEBI:18420"/>
    </ligand>
</feature>
<feature type="binding site" description="in other chain" evidence="1">
    <location>
        <begin position="38"/>
        <end position="41"/>
    </location>
    <ligand>
        <name>IMP</name>
        <dbReference type="ChEBI" id="CHEBI:58053"/>
        <note>ligand shared between dimeric partners</note>
    </ligand>
</feature>
<feature type="binding site" evidence="1">
    <location>
        <begin position="40"/>
        <end position="42"/>
    </location>
    <ligand>
        <name>GTP</name>
        <dbReference type="ChEBI" id="CHEBI:37565"/>
    </ligand>
</feature>
<feature type="binding site" evidence="1">
    <location>
        <position position="40"/>
    </location>
    <ligand>
        <name>Mg(2+)</name>
        <dbReference type="ChEBI" id="CHEBI:18420"/>
    </ligand>
</feature>
<feature type="binding site" description="in other chain" evidence="1">
    <location>
        <position position="130"/>
    </location>
    <ligand>
        <name>IMP</name>
        <dbReference type="ChEBI" id="CHEBI:58053"/>
        <note>ligand shared between dimeric partners</note>
    </ligand>
</feature>
<feature type="binding site" evidence="1">
    <location>
        <position position="144"/>
    </location>
    <ligand>
        <name>IMP</name>
        <dbReference type="ChEBI" id="CHEBI:58053"/>
        <note>ligand shared between dimeric partners</note>
    </ligand>
</feature>
<feature type="binding site" description="in other chain" evidence="1">
    <location>
        <position position="224"/>
    </location>
    <ligand>
        <name>IMP</name>
        <dbReference type="ChEBI" id="CHEBI:58053"/>
        <note>ligand shared between dimeric partners</note>
    </ligand>
</feature>
<feature type="binding site" description="in other chain" evidence="1">
    <location>
        <position position="239"/>
    </location>
    <ligand>
        <name>IMP</name>
        <dbReference type="ChEBI" id="CHEBI:58053"/>
        <note>ligand shared between dimeric partners</note>
    </ligand>
</feature>
<feature type="binding site" evidence="1">
    <location>
        <begin position="297"/>
        <end position="303"/>
    </location>
    <ligand>
        <name>substrate</name>
    </ligand>
</feature>
<feature type="binding site" description="in other chain" evidence="1">
    <location>
        <position position="301"/>
    </location>
    <ligand>
        <name>IMP</name>
        <dbReference type="ChEBI" id="CHEBI:58053"/>
        <note>ligand shared between dimeric partners</note>
    </ligand>
</feature>
<feature type="binding site" evidence="1">
    <location>
        <position position="303"/>
    </location>
    <ligand>
        <name>GTP</name>
        <dbReference type="ChEBI" id="CHEBI:37565"/>
    </ligand>
</feature>
<feature type="binding site" evidence="1">
    <location>
        <begin position="329"/>
        <end position="331"/>
    </location>
    <ligand>
        <name>GTP</name>
        <dbReference type="ChEBI" id="CHEBI:37565"/>
    </ligand>
</feature>
<feature type="binding site" evidence="1">
    <location>
        <begin position="411"/>
        <end position="413"/>
    </location>
    <ligand>
        <name>GTP</name>
        <dbReference type="ChEBI" id="CHEBI:37565"/>
    </ligand>
</feature>
<comment type="function">
    <text evidence="1">Plays an important role in the de novo pathway of purine nucleotide biosynthesis. Catalyzes the first committed step in the biosynthesis of AMP from IMP.</text>
</comment>
<comment type="catalytic activity">
    <reaction evidence="1">
        <text>IMP + L-aspartate + GTP = N(6)-(1,2-dicarboxyethyl)-AMP + GDP + phosphate + 2 H(+)</text>
        <dbReference type="Rhea" id="RHEA:15753"/>
        <dbReference type="ChEBI" id="CHEBI:15378"/>
        <dbReference type="ChEBI" id="CHEBI:29991"/>
        <dbReference type="ChEBI" id="CHEBI:37565"/>
        <dbReference type="ChEBI" id="CHEBI:43474"/>
        <dbReference type="ChEBI" id="CHEBI:57567"/>
        <dbReference type="ChEBI" id="CHEBI:58053"/>
        <dbReference type="ChEBI" id="CHEBI:58189"/>
        <dbReference type="EC" id="6.3.4.4"/>
    </reaction>
</comment>
<comment type="cofactor">
    <cofactor evidence="1">
        <name>Mg(2+)</name>
        <dbReference type="ChEBI" id="CHEBI:18420"/>
    </cofactor>
    <text evidence="1">Binds 1 Mg(2+) ion per subunit.</text>
</comment>
<comment type="pathway">
    <text evidence="1">Purine metabolism; AMP biosynthesis via de novo pathway; AMP from IMP: step 1/2.</text>
</comment>
<comment type="subunit">
    <text evidence="1">Homodimer.</text>
</comment>
<comment type="subcellular location">
    <subcellularLocation>
        <location evidence="1">Cytoplasm</location>
    </subcellularLocation>
</comment>
<comment type="similarity">
    <text evidence="1">Belongs to the adenylosuccinate synthetase family.</text>
</comment>
<reference key="1">
    <citation type="journal article" date="2005" name="PLoS Biol.">
        <title>The Wolbachia genome of Brugia malayi: endosymbiont evolution within a human pathogenic nematode.</title>
        <authorList>
            <person name="Foster J."/>
            <person name="Ganatra M."/>
            <person name="Kamal I."/>
            <person name="Ware J."/>
            <person name="Makarova K."/>
            <person name="Ivanova N."/>
            <person name="Bhattacharyya A."/>
            <person name="Kapatral V."/>
            <person name="Kumar S."/>
            <person name="Posfai J."/>
            <person name="Vincze T."/>
            <person name="Ingram J."/>
            <person name="Moran L."/>
            <person name="Lapidus A."/>
            <person name="Omelchenko M."/>
            <person name="Kyrpides N."/>
            <person name="Ghedin E."/>
            <person name="Wang S."/>
            <person name="Goltsman E."/>
            <person name="Joukov V."/>
            <person name="Ostrovskaya O."/>
            <person name="Tsukerman K."/>
            <person name="Mazur M."/>
            <person name="Comb D."/>
            <person name="Koonin E."/>
            <person name="Slatko B."/>
        </authorList>
    </citation>
    <scope>NUCLEOTIDE SEQUENCE [LARGE SCALE GENOMIC DNA]</scope>
    <source>
        <strain>TRS</strain>
    </source>
</reference>
<protein>
    <recommendedName>
        <fullName evidence="1">Adenylosuccinate synthetase</fullName>
        <shortName evidence="1">AMPSase</shortName>
        <shortName evidence="1">AdSS</shortName>
        <ecNumber evidence="1">6.3.4.4</ecNumber>
    </recommendedName>
    <alternativeName>
        <fullName evidence="1">IMP--aspartate ligase</fullName>
    </alternativeName>
</protein>
<evidence type="ECO:0000255" key="1">
    <source>
        <dbReference type="HAMAP-Rule" id="MF_00011"/>
    </source>
</evidence>
<organism>
    <name type="scientific">Wolbachia sp. subsp. Brugia malayi (strain TRS)</name>
    <dbReference type="NCBI Taxonomy" id="292805"/>
    <lineage>
        <taxon>Bacteria</taxon>
        <taxon>Pseudomonadati</taxon>
        <taxon>Pseudomonadota</taxon>
        <taxon>Alphaproteobacteria</taxon>
        <taxon>Rickettsiales</taxon>
        <taxon>Anaplasmataceae</taxon>
        <taxon>Wolbachieae</taxon>
        <taxon>Wolbachia</taxon>
    </lineage>
</organism>
<sequence length="435" mass="48620">MNNIVIVGLQWGDEGKGKIVDYLSENADTVVRFQGGNNAGHTIVVDDEVYKLNLLPSAVLRTGKISIIGNGVALDPYALISEIESLRVKGMDINPNNLMVSESCPLILSVHKEKEKLFEDLNGNHKIGTTNKGIGPCYEDKVGRRAIRLCDLENADELNKRLDTLLNYHNAIRKGLSYRVIKKEEMLREIEEIAEKIIPYRKPVWKILNDFVKEGKKIIFEGAQGTFLDIDHGTYPFVTSSNTIASQVMTGSGLSSNAYVIGVAKAYTTRVGNGPFPTEQRNEVGNSLFTIGKELGTVSNRKRRCGWFDAVLVRQAVQLSGVSSIILTKLDVLDSFDKIKICTGYQYSGKIYDYLPASRSIQEELEPIYEEFPGWKENTQGEKLAEKLPVNLIKYVKRVEELIGIPIHLISAGPKREDVIKLKDFKFSESVLVSY</sequence>
<keyword id="KW-0963">Cytoplasm</keyword>
<keyword id="KW-0342">GTP-binding</keyword>
<keyword id="KW-0436">Ligase</keyword>
<keyword id="KW-0460">Magnesium</keyword>
<keyword id="KW-0479">Metal-binding</keyword>
<keyword id="KW-0547">Nucleotide-binding</keyword>
<keyword id="KW-0658">Purine biosynthesis</keyword>
<keyword id="KW-1185">Reference proteome</keyword>
<proteinExistence type="inferred from homology"/>
<dbReference type="EC" id="6.3.4.4" evidence="1"/>
<dbReference type="EMBL" id="AE017321">
    <property type="protein sequence ID" value="AAW70862.1"/>
    <property type="molecule type" value="Genomic_DNA"/>
</dbReference>
<dbReference type="RefSeq" id="WP_011256472.1">
    <property type="nucleotide sequence ID" value="NC_006833.1"/>
</dbReference>
<dbReference type="SMR" id="Q5GT12"/>
<dbReference type="STRING" id="292805.Wbm0273"/>
<dbReference type="KEGG" id="wbm:Wbm0273"/>
<dbReference type="eggNOG" id="COG0104">
    <property type="taxonomic scope" value="Bacteria"/>
</dbReference>
<dbReference type="HOGENOM" id="CLU_029848_0_0_5"/>
<dbReference type="UniPathway" id="UPA00075">
    <property type="reaction ID" value="UER00335"/>
</dbReference>
<dbReference type="Proteomes" id="UP000000534">
    <property type="component" value="Chromosome"/>
</dbReference>
<dbReference type="GO" id="GO:0005737">
    <property type="term" value="C:cytoplasm"/>
    <property type="evidence" value="ECO:0007669"/>
    <property type="project" value="UniProtKB-SubCell"/>
</dbReference>
<dbReference type="GO" id="GO:0004019">
    <property type="term" value="F:adenylosuccinate synthase activity"/>
    <property type="evidence" value="ECO:0007669"/>
    <property type="project" value="UniProtKB-UniRule"/>
</dbReference>
<dbReference type="GO" id="GO:0005525">
    <property type="term" value="F:GTP binding"/>
    <property type="evidence" value="ECO:0007669"/>
    <property type="project" value="UniProtKB-UniRule"/>
</dbReference>
<dbReference type="GO" id="GO:0000287">
    <property type="term" value="F:magnesium ion binding"/>
    <property type="evidence" value="ECO:0007669"/>
    <property type="project" value="UniProtKB-UniRule"/>
</dbReference>
<dbReference type="GO" id="GO:0044208">
    <property type="term" value="P:'de novo' AMP biosynthetic process"/>
    <property type="evidence" value="ECO:0007669"/>
    <property type="project" value="UniProtKB-UniRule"/>
</dbReference>
<dbReference type="GO" id="GO:0046040">
    <property type="term" value="P:IMP metabolic process"/>
    <property type="evidence" value="ECO:0007669"/>
    <property type="project" value="TreeGrafter"/>
</dbReference>
<dbReference type="CDD" id="cd03108">
    <property type="entry name" value="AdSS"/>
    <property type="match status" value="1"/>
</dbReference>
<dbReference type="FunFam" id="1.10.300.10:FF:000001">
    <property type="entry name" value="Adenylosuccinate synthetase"/>
    <property type="match status" value="1"/>
</dbReference>
<dbReference type="FunFam" id="3.90.170.10:FF:000001">
    <property type="entry name" value="Adenylosuccinate synthetase"/>
    <property type="match status" value="1"/>
</dbReference>
<dbReference type="Gene3D" id="3.40.440.10">
    <property type="entry name" value="Adenylosuccinate Synthetase, subunit A, domain 1"/>
    <property type="match status" value="1"/>
</dbReference>
<dbReference type="Gene3D" id="1.10.300.10">
    <property type="entry name" value="Adenylosuccinate Synthetase, subunit A, domain 2"/>
    <property type="match status" value="1"/>
</dbReference>
<dbReference type="Gene3D" id="3.90.170.10">
    <property type="entry name" value="Adenylosuccinate Synthetase, subunit A, domain 3"/>
    <property type="match status" value="1"/>
</dbReference>
<dbReference type="HAMAP" id="MF_00011">
    <property type="entry name" value="Adenylosucc_synth"/>
    <property type="match status" value="1"/>
</dbReference>
<dbReference type="InterPro" id="IPR018220">
    <property type="entry name" value="Adenylosuccin_syn_GTP-bd"/>
</dbReference>
<dbReference type="InterPro" id="IPR033128">
    <property type="entry name" value="Adenylosuccin_syn_Lys_AS"/>
</dbReference>
<dbReference type="InterPro" id="IPR042109">
    <property type="entry name" value="Adenylosuccinate_synth_dom1"/>
</dbReference>
<dbReference type="InterPro" id="IPR042110">
    <property type="entry name" value="Adenylosuccinate_synth_dom2"/>
</dbReference>
<dbReference type="InterPro" id="IPR042111">
    <property type="entry name" value="Adenylosuccinate_synth_dom3"/>
</dbReference>
<dbReference type="InterPro" id="IPR001114">
    <property type="entry name" value="Adenylosuccinate_synthetase"/>
</dbReference>
<dbReference type="InterPro" id="IPR027417">
    <property type="entry name" value="P-loop_NTPase"/>
</dbReference>
<dbReference type="NCBIfam" id="NF002223">
    <property type="entry name" value="PRK01117.1"/>
    <property type="match status" value="1"/>
</dbReference>
<dbReference type="NCBIfam" id="TIGR00184">
    <property type="entry name" value="purA"/>
    <property type="match status" value="1"/>
</dbReference>
<dbReference type="PANTHER" id="PTHR11846">
    <property type="entry name" value="ADENYLOSUCCINATE SYNTHETASE"/>
    <property type="match status" value="1"/>
</dbReference>
<dbReference type="PANTHER" id="PTHR11846:SF0">
    <property type="entry name" value="ADENYLOSUCCINATE SYNTHETASE"/>
    <property type="match status" value="1"/>
</dbReference>
<dbReference type="Pfam" id="PF00709">
    <property type="entry name" value="Adenylsucc_synt"/>
    <property type="match status" value="1"/>
</dbReference>
<dbReference type="SMART" id="SM00788">
    <property type="entry name" value="Adenylsucc_synt"/>
    <property type="match status" value="1"/>
</dbReference>
<dbReference type="SUPFAM" id="SSF52540">
    <property type="entry name" value="P-loop containing nucleoside triphosphate hydrolases"/>
    <property type="match status" value="1"/>
</dbReference>
<dbReference type="PROSITE" id="PS01266">
    <property type="entry name" value="ADENYLOSUCCIN_SYN_1"/>
    <property type="match status" value="1"/>
</dbReference>
<dbReference type="PROSITE" id="PS00513">
    <property type="entry name" value="ADENYLOSUCCIN_SYN_2"/>
    <property type="match status" value="1"/>
</dbReference>